<comment type="function">
    <text evidence="2">Responsible for the formation of the pyrimidine heterocycle in the thiamine biosynthesis pathway. Catalyzes the formation of hydroxymethylpyrimidine phosphate (HMP-P) from histidine and pyridoxal phosphate (PLP). The protein uses PLP and the active site histidine to form HMP-P, generating an inactive enzyme. The enzyme can only undergo a single turnover, which suggests it is a suicide enzyme.</text>
</comment>
<comment type="catalytic activity">
    <reaction evidence="2">
        <text>N(6)-(pyridoxal phosphate)-L-lysyl-[4-amino-5-hydroxymethyl-2-methylpyrimidine phosphate synthase] + L-histidyl-[4-amino-5-hydroxymethyl-2-methylpyrimidine phosphate synthase] + 2 Fe(3+) + 4 H2O = L-lysyl-[4-amino-5-hydroxymethyl-2-methylpyrimidine phosphate synthase] + (2S)-2-amino-5-hydroxy-4-oxopentanoyl-[4-amino-5-hydroxymethyl-2-methylpyrimidine phosphate synthase] + 4-amino-2-methyl-5-(phosphooxymethyl)pyrimidine + 3-oxopropanoate + 2 Fe(2+) + 2 H(+)</text>
        <dbReference type="Rhea" id="RHEA:65756"/>
        <dbReference type="Rhea" id="RHEA-COMP:16892"/>
        <dbReference type="Rhea" id="RHEA-COMP:16893"/>
        <dbReference type="Rhea" id="RHEA-COMP:16894"/>
        <dbReference type="Rhea" id="RHEA-COMP:16895"/>
        <dbReference type="ChEBI" id="CHEBI:15377"/>
        <dbReference type="ChEBI" id="CHEBI:15378"/>
        <dbReference type="ChEBI" id="CHEBI:29033"/>
        <dbReference type="ChEBI" id="CHEBI:29034"/>
        <dbReference type="ChEBI" id="CHEBI:29969"/>
        <dbReference type="ChEBI" id="CHEBI:29979"/>
        <dbReference type="ChEBI" id="CHEBI:33190"/>
        <dbReference type="ChEBI" id="CHEBI:58354"/>
        <dbReference type="ChEBI" id="CHEBI:143915"/>
        <dbReference type="ChEBI" id="CHEBI:157692"/>
    </reaction>
    <physiologicalReaction direction="left-to-right" evidence="2">
        <dbReference type="Rhea" id="RHEA:65757"/>
    </physiologicalReaction>
</comment>
<comment type="cofactor">
    <cofactor evidence="2">
        <name>Fe(3+)</name>
        <dbReference type="ChEBI" id="CHEBI:29034"/>
    </cofactor>
</comment>
<comment type="pathway">
    <text evidence="5">Cofactor biosynthesis; thiamine diphosphate biosynthesis.</text>
</comment>
<comment type="subunit">
    <text evidence="2">Homodimer.</text>
</comment>
<comment type="mass spectrometry" mass="40408.0" method="Electrospray" evidence="2">
    <text>The measured mass includes the mass of an N-terminal poly-histidine tag, expressed in E.coli.</text>
</comment>
<comment type="similarity">
    <text evidence="4">Belongs to the NMT1/THI5 family.</text>
</comment>
<dbReference type="EC" id="2.-.-.-" evidence="2"/>
<dbReference type="EMBL" id="CM000309">
    <property type="protein sequence ID" value="EEQ43943.1"/>
    <property type="molecule type" value="Genomic_DNA"/>
</dbReference>
<dbReference type="PDB" id="4ESW">
    <property type="method" value="X-ray"/>
    <property type="resolution" value="1.60 A"/>
    <property type="chains" value="A/B=1-339"/>
</dbReference>
<dbReference type="PDB" id="4ESX">
    <property type="method" value="X-ray"/>
    <property type="resolution" value="2.20 A"/>
    <property type="chains" value="A/B=1-339"/>
</dbReference>
<dbReference type="PDBsum" id="4ESW"/>
<dbReference type="PDBsum" id="4ESX"/>
<dbReference type="SMR" id="C4YMW2"/>
<dbReference type="PaxDb" id="5476-C4YMW2"/>
<dbReference type="VEuPathDB" id="FungiDB:CAWG_02199"/>
<dbReference type="HOGENOM" id="CLU_028871_6_3_1"/>
<dbReference type="OMA" id="TKHYGMT"/>
<dbReference type="OrthoDB" id="284at766764"/>
<dbReference type="UniPathway" id="UPA00060"/>
<dbReference type="EvolutionaryTrace" id="C4YMW2"/>
<dbReference type="Proteomes" id="UP000001429">
    <property type="component" value="Chromosome R"/>
</dbReference>
<dbReference type="GO" id="GO:0106344">
    <property type="term" value="F:4-amino-5-hydroxymethyl-2-methylpyrimidine phosphate synthase activity from histidine and PLP"/>
    <property type="evidence" value="ECO:0000314"/>
    <property type="project" value="UniProtKB"/>
</dbReference>
<dbReference type="GO" id="GO:0046872">
    <property type="term" value="F:metal ion binding"/>
    <property type="evidence" value="ECO:0007669"/>
    <property type="project" value="UniProtKB-KW"/>
</dbReference>
<dbReference type="GO" id="GO:0009228">
    <property type="term" value="P:thiamine biosynthetic process"/>
    <property type="evidence" value="ECO:0007669"/>
    <property type="project" value="UniProtKB-KW"/>
</dbReference>
<dbReference type="GO" id="GO:0009229">
    <property type="term" value="P:thiamine diphosphate biosynthetic process"/>
    <property type="evidence" value="ECO:0007669"/>
    <property type="project" value="UniProtKB-UniPathway"/>
</dbReference>
<dbReference type="CDD" id="cd13650">
    <property type="entry name" value="PBP2_THI5"/>
    <property type="match status" value="1"/>
</dbReference>
<dbReference type="FunFam" id="3.40.190.10:FF:000187">
    <property type="entry name" value="4-amino-5-hydroxymethyl-2-methylpyrimidine phosphate synthase THI5"/>
    <property type="match status" value="1"/>
</dbReference>
<dbReference type="Gene3D" id="3.40.190.10">
    <property type="entry name" value="Periplasmic binding protein-like II"/>
    <property type="match status" value="2"/>
</dbReference>
<dbReference type="InterPro" id="IPR027939">
    <property type="entry name" value="NMT1/THI5"/>
</dbReference>
<dbReference type="InterPro" id="IPR015168">
    <property type="entry name" value="SsuA/THI5"/>
</dbReference>
<dbReference type="PANTHER" id="PTHR31528">
    <property type="entry name" value="4-AMINO-5-HYDROXYMETHYL-2-METHYLPYRIMIDINE PHOSPHATE SYNTHASE THI11-RELATED"/>
    <property type="match status" value="1"/>
</dbReference>
<dbReference type="PANTHER" id="PTHR31528:SF1">
    <property type="entry name" value="4-AMINO-5-HYDROXYMETHYL-2-METHYLPYRIMIDINE PHOSPHATE SYNTHASE THI11-RELATED"/>
    <property type="match status" value="1"/>
</dbReference>
<dbReference type="Pfam" id="PF09084">
    <property type="entry name" value="NMT1"/>
    <property type="match status" value="1"/>
</dbReference>
<dbReference type="SUPFAM" id="SSF53850">
    <property type="entry name" value="Periplasmic binding protein-like II"/>
    <property type="match status" value="1"/>
</dbReference>
<evidence type="ECO:0000250" key="1">
    <source>
        <dbReference type="UniProtKB" id="P43534"/>
    </source>
</evidence>
<evidence type="ECO:0000269" key="2">
    <source>
    </source>
</evidence>
<evidence type="ECO:0000303" key="3">
    <source>
    </source>
</evidence>
<evidence type="ECO:0000305" key="4"/>
<evidence type="ECO:0000305" key="5">
    <source>
    </source>
</evidence>
<evidence type="ECO:0007829" key="6">
    <source>
        <dbReference type="PDB" id="4ESW"/>
    </source>
</evidence>
<reference key="1">
    <citation type="journal article" date="2009" name="Nature">
        <title>Evolution of pathogenicity and sexual reproduction in eight Candida genomes.</title>
        <authorList>
            <person name="Butler G."/>
            <person name="Rasmussen M.D."/>
            <person name="Lin M.F."/>
            <person name="Santos M.A.S."/>
            <person name="Sakthikumar S."/>
            <person name="Munro C.A."/>
            <person name="Rheinbay E."/>
            <person name="Grabherr M."/>
            <person name="Forche A."/>
            <person name="Reedy J.L."/>
            <person name="Agrafioti I."/>
            <person name="Arnaud M.B."/>
            <person name="Bates S."/>
            <person name="Brown A.J.P."/>
            <person name="Brunke S."/>
            <person name="Costanzo M.C."/>
            <person name="Fitzpatrick D.A."/>
            <person name="de Groot P.W.J."/>
            <person name="Harris D."/>
            <person name="Hoyer L.L."/>
            <person name="Hube B."/>
            <person name="Klis F.M."/>
            <person name="Kodira C."/>
            <person name="Lennard N."/>
            <person name="Logue M.E."/>
            <person name="Martin R."/>
            <person name="Neiman A.M."/>
            <person name="Nikolaou E."/>
            <person name="Quail M.A."/>
            <person name="Quinn J."/>
            <person name="Santos M.C."/>
            <person name="Schmitzberger F.F."/>
            <person name="Sherlock G."/>
            <person name="Shah P."/>
            <person name="Silverstein K.A.T."/>
            <person name="Skrzypek M.S."/>
            <person name="Soll D."/>
            <person name="Staggs R."/>
            <person name="Stansfield I."/>
            <person name="Stumpf M.P.H."/>
            <person name="Sudbery P.E."/>
            <person name="Srikantha T."/>
            <person name="Zeng Q."/>
            <person name="Berman J."/>
            <person name="Berriman M."/>
            <person name="Heitman J."/>
            <person name="Gow N.A.R."/>
            <person name="Lorenz M.C."/>
            <person name="Birren B.W."/>
            <person name="Kellis M."/>
            <person name="Cuomo C.A."/>
        </authorList>
    </citation>
    <scope>NUCLEOTIDE SEQUENCE [LARGE SCALE GENOMIC DNA]</scope>
    <source>
        <strain>WO-1</strain>
    </source>
</reference>
<reference key="2">
    <citation type="journal article" date="2012" name="J. Am. Chem. Soc.">
        <title>Thiamin pyrimidine biosynthesis in Candida albicans: a remarkable reaction between histidine and pyridoxal phosphate.</title>
        <authorList>
            <person name="Lai R.Y."/>
            <person name="Huang S."/>
            <person name="Fenwick M.K."/>
            <person name="Hazra A."/>
            <person name="Zhang Y."/>
            <person name="Rajashankar K."/>
            <person name="Philmus B."/>
            <person name="Kinsland C."/>
            <person name="Sanders J.M."/>
            <person name="Ealick S.E."/>
            <person name="Begley T.P."/>
        </authorList>
    </citation>
    <scope>X-RAY CRYSTALLOGRAPHY (1.60 ANGSTROMS) OF WILD-TYPE IN COMPLEX WITH PYRIDOXAL PHOSPHATE AND OF MUTANT GLY-66</scope>
    <scope>FUNCTION</scope>
    <scope>CATALYTIC ACTIVITY</scope>
    <scope>COFACTOR</scope>
    <scope>SUBUNIT</scope>
    <scope>MASS SPECTROMETRY</scope>
    <scope>ACTIVE SITE</scope>
    <scope>MUTAGENESIS OF HIS-66</scope>
</reference>
<gene>
    <name evidence="3" type="primary">THI5</name>
    <name type="ORF">CAWG_02199</name>
</gene>
<protein>
    <recommendedName>
        <fullName evidence="1">4-amino-5-hydroxymethyl-2-methylpyrimidine phosphate synthase</fullName>
        <shortName evidence="4">HMP-P synthase</shortName>
        <shortName evidence="4">Hydroxymethylpyrimidine phosphate synthase</shortName>
        <ecNumber evidence="2">2.-.-.-</ecNumber>
    </recommendedName>
    <alternativeName>
        <fullName evidence="3">Thiamine biosynthesis protein 5</fullName>
    </alternativeName>
    <alternativeName>
        <fullName evidence="3">Thiamine pyrimidine synthase</fullName>
    </alternativeName>
</protein>
<organism>
    <name type="scientific">Candida albicans (strain WO-1)</name>
    <name type="common">Yeast</name>
    <dbReference type="NCBI Taxonomy" id="294748"/>
    <lineage>
        <taxon>Eukaryota</taxon>
        <taxon>Fungi</taxon>
        <taxon>Dikarya</taxon>
        <taxon>Ascomycota</taxon>
        <taxon>Saccharomycotina</taxon>
        <taxon>Pichiomycetes</taxon>
        <taxon>Debaryomycetaceae</taxon>
        <taxon>Candida/Lodderomyces clade</taxon>
        <taxon>Candida</taxon>
    </lineage>
</organism>
<keyword id="KW-0002">3D-structure</keyword>
<keyword id="KW-0408">Iron</keyword>
<keyword id="KW-0479">Metal-binding</keyword>
<keyword id="KW-0663">Pyridoxal phosphate</keyword>
<keyword id="KW-0784">Thiamine biosynthesis</keyword>
<keyword id="KW-0808">Transferase</keyword>
<proteinExistence type="evidence at protein level"/>
<feature type="chain" id="PRO_0000431581" description="4-amino-5-hydroxymethyl-2-methylpyrimidine phosphate synthase">
    <location>
        <begin position="1"/>
        <end position="339"/>
    </location>
</feature>
<feature type="short sequence motif" description="CCCFC; essential for catalytic activity, may be the site of iron coordination" evidence="1">
    <location>
        <begin position="195"/>
        <end position="199"/>
    </location>
</feature>
<feature type="active site" evidence="5">
    <location>
        <position position="66"/>
    </location>
</feature>
<feature type="binding site" evidence="2">
    <location>
        <begin position="115"/>
        <end position="118"/>
    </location>
    <ligand>
        <name>pyridoxal 5'-phosphate</name>
        <dbReference type="ChEBI" id="CHEBI:597326"/>
    </ligand>
</feature>
<feature type="modified residue" description="N6-(pyridoxal phosphate)lysine" evidence="2">
    <location>
        <position position="62"/>
    </location>
</feature>
<feature type="mutagenesis site" description="Abolishes catalytic activity." evidence="2">
    <original>H</original>
    <variation>N</variation>
    <variation>G</variation>
    <location>
        <position position="66"/>
    </location>
</feature>
<feature type="strand" evidence="6">
    <location>
        <begin position="5"/>
        <end position="9"/>
    </location>
</feature>
<feature type="strand" evidence="6">
    <location>
        <begin position="11"/>
        <end position="14"/>
    </location>
</feature>
<feature type="helix" evidence="6">
    <location>
        <begin position="16"/>
        <end position="18"/>
    </location>
</feature>
<feature type="helix" evidence="6">
    <location>
        <begin position="19"/>
        <end position="26"/>
    </location>
</feature>
<feature type="helix" evidence="6">
    <location>
        <begin position="29"/>
        <end position="32"/>
    </location>
</feature>
<feature type="strand" evidence="6">
    <location>
        <begin position="36"/>
        <end position="44"/>
    </location>
</feature>
<feature type="helix" evidence="6">
    <location>
        <begin position="45"/>
        <end position="47"/>
    </location>
</feature>
<feature type="helix" evidence="6">
    <location>
        <begin position="48"/>
        <end position="53"/>
    </location>
</feature>
<feature type="strand" evidence="6">
    <location>
        <begin position="56"/>
        <end position="63"/>
    </location>
</feature>
<feature type="helix" evidence="6">
    <location>
        <begin position="64"/>
        <end position="72"/>
    </location>
</feature>
<feature type="strand" evidence="6">
    <location>
        <begin position="77"/>
        <end position="84"/>
    </location>
</feature>
<feature type="strand" evidence="6">
    <location>
        <begin position="89"/>
        <end position="94"/>
    </location>
</feature>
<feature type="helix" evidence="6">
    <location>
        <begin position="103"/>
        <end position="106"/>
    </location>
</feature>
<feature type="strand" evidence="6">
    <location>
        <begin position="110"/>
        <end position="116"/>
    </location>
</feature>
<feature type="helix" evidence="6">
    <location>
        <begin position="117"/>
        <end position="126"/>
    </location>
</feature>
<feature type="helix" evidence="6">
    <location>
        <begin position="127"/>
        <end position="129"/>
    </location>
</feature>
<feature type="helix" evidence="6">
    <location>
        <begin position="133"/>
        <end position="135"/>
    </location>
</feature>
<feature type="strand" evidence="6">
    <location>
        <begin position="136"/>
        <end position="140"/>
    </location>
</feature>
<feature type="helix" evidence="6">
    <location>
        <begin position="142"/>
        <end position="144"/>
    </location>
</feature>
<feature type="helix" evidence="6">
    <location>
        <begin position="145"/>
        <end position="150"/>
    </location>
</feature>
<feature type="strand" evidence="6">
    <location>
        <begin position="153"/>
        <end position="160"/>
    </location>
</feature>
<feature type="turn" evidence="6">
    <location>
        <begin position="161"/>
        <end position="163"/>
    </location>
</feature>
<feature type="helix" evidence="6">
    <location>
        <begin position="164"/>
        <end position="174"/>
    </location>
</feature>
<feature type="helix" evidence="6">
    <location>
        <begin position="179"/>
        <end position="181"/>
    </location>
</feature>
<feature type="strand" evidence="6">
    <location>
        <begin position="182"/>
        <end position="186"/>
    </location>
</feature>
<feature type="helix" evidence="6">
    <location>
        <begin position="187"/>
        <end position="190"/>
    </location>
</feature>
<feature type="helix" evidence="6">
    <location>
        <begin position="197"/>
        <end position="199"/>
    </location>
</feature>
<feature type="strand" evidence="6">
    <location>
        <begin position="201"/>
        <end position="206"/>
    </location>
</feature>
<feature type="helix" evidence="6">
    <location>
        <begin position="207"/>
        <end position="212"/>
    </location>
</feature>
<feature type="helix" evidence="6">
    <location>
        <begin position="214"/>
        <end position="233"/>
    </location>
</feature>
<feature type="helix" evidence="6">
    <location>
        <begin position="235"/>
        <end position="245"/>
    </location>
</feature>
<feature type="helix" evidence="6">
    <location>
        <begin position="247"/>
        <end position="250"/>
    </location>
</feature>
<feature type="helix" evidence="6">
    <location>
        <begin position="252"/>
        <end position="262"/>
    </location>
</feature>
<feature type="helix" evidence="6">
    <location>
        <begin position="273"/>
        <end position="285"/>
    </location>
</feature>
<feature type="helix" evidence="6">
    <location>
        <begin position="313"/>
        <end position="330"/>
    </location>
</feature>
<accession>C4YMW2</accession>
<name>THI5_CANAW</name>
<sequence length="339" mass="38377">MSTNKITFLLNWEAAPYHIPVYLANIKGYFKDENLDIAILEPSNPSDVTELVGSGKVDMGLKAMVHTLAAKARGFPVTSIGSLLDEPFTGICYLEGSGITSDFQSLKGKRIGYVGEFGKIQVDELTKHYGMTPDDYVAVRCGMNVAKYILEGTIDCGIGIECIQQVELEEALKEQGKDSNDAKMLRIDKLAELGCCCFCTILYIANDKFIAENPQAVKKFLKAIKRATDYMLAHPREAWAEYGNFKPTMQTDLNTKKFQRCYAYFSESLYNVHRDWRKVNNYGKRLDILPENYVPNYTNEYLSWPEPKEVDDPEKAQDLMLKHQEECKTCGGYKRLVLA</sequence>